<gene>
    <name evidence="1" type="primary">psbI</name>
</gene>
<geneLocation type="chloroplast"/>
<feature type="chain" id="PRO_0000275801" description="Photosystem II reaction center protein I">
    <location>
        <begin position="1"/>
        <end position="35"/>
    </location>
</feature>
<feature type="transmembrane region" description="Helical" evidence="1">
    <location>
        <begin position="4"/>
        <end position="24"/>
    </location>
</feature>
<comment type="function">
    <text evidence="1">One of the components of the core complex of photosystem II (PSII), required for its stability and/or assembly. PSII is a light-driven water:plastoquinone oxidoreductase that uses light energy to abstract electrons from H(2)O, generating O(2) and a proton gradient subsequently used for ATP formation. It consists of a core antenna complex that captures photons, and an electron transfer chain that converts photonic excitation into a charge separation.</text>
</comment>
<comment type="subunit">
    <text evidence="1">PSII is composed of 1 copy each of membrane proteins PsbA, PsbB, PsbC, PsbD, PsbE, PsbF, PsbH, PsbI, PsbJ, PsbK, PsbL, PsbM, PsbT, PsbX, PsbY, PsbZ, Psb30/Ycf12, at least 3 peripheral proteins of the oxygen-evolving complex and a large number of cofactors. It forms dimeric complexes.</text>
</comment>
<comment type="subcellular location">
    <subcellularLocation>
        <location evidence="1">Plastid</location>
        <location evidence="1">Chloroplast thylakoid membrane</location>
        <topology evidence="1">Single-pass membrane protein</topology>
    </subcellularLocation>
</comment>
<comment type="similarity">
    <text evidence="1">Belongs to the PsbI family.</text>
</comment>
<evidence type="ECO:0000255" key="1">
    <source>
        <dbReference type="HAMAP-Rule" id="MF_01316"/>
    </source>
</evidence>
<proteinExistence type="inferred from homology"/>
<sequence length="35" mass="4027">MLTLKIFVYTVVTFFVSLFIFGFLSNDPGRNPGER</sequence>
<dbReference type="EMBL" id="DQ291132">
    <property type="protein sequence ID" value="ABB81985.1"/>
    <property type="molecule type" value="Genomic_DNA"/>
</dbReference>
<dbReference type="RefSeq" id="YP_635824.1">
    <property type="nucleotide sequence ID" value="NC_008099.1"/>
</dbReference>
<dbReference type="SMR" id="Q20F21"/>
<dbReference type="GeneID" id="4100159"/>
<dbReference type="GO" id="GO:0009535">
    <property type="term" value="C:chloroplast thylakoid membrane"/>
    <property type="evidence" value="ECO:0007669"/>
    <property type="project" value="UniProtKB-SubCell"/>
</dbReference>
<dbReference type="GO" id="GO:0009539">
    <property type="term" value="C:photosystem II reaction center"/>
    <property type="evidence" value="ECO:0007669"/>
    <property type="project" value="InterPro"/>
</dbReference>
<dbReference type="GO" id="GO:0015979">
    <property type="term" value="P:photosynthesis"/>
    <property type="evidence" value="ECO:0007669"/>
    <property type="project" value="UniProtKB-UniRule"/>
</dbReference>
<dbReference type="HAMAP" id="MF_01316">
    <property type="entry name" value="PSII_PsbI"/>
    <property type="match status" value="1"/>
</dbReference>
<dbReference type="InterPro" id="IPR003686">
    <property type="entry name" value="PSII_PsbI"/>
</dbReference>
<dbReference type="InterPro" id="IPR037271">
    <property type="entry name" value="PSII_PsbI_sf"/>
</dbReference>
<dbReference type="NCBIfam" id="NF002735">
    <property type="entry name" value="PRK02655.1"/>
    <property type="match status" value="1"/>
</dbReference>
<dbReference type="PANTHER" id="PTHR35772">
    <property type="entry name" value="PHOTOSYSTEM II REACTION CENTER PROTEIN I"/>
    <property type="match status" value="1"/>
</dbReference>
<dbReference type="PANTHER" id="PTHR35772:SF1">
    <property type="entry name" value="PHOTOSYSTEM II REACTION CENTER PROTEIN I"/>
    <property type="match status" value="1"/>
</dbReference>
<dbReference type="Pfam" id="PF02532">
    <property type="entry name" value="PsbI"/>
    <property type="match status" value="1"/>
</dbReference>
<dbReference type="SUPFAM" id="SSF161041">
    <property type="entry name" value="Photosystem II reaction center protein I, PsbI"/>
    <property type="match status" value="1"/>
</dbReference>
<organism>
    <name type="scientific">Oltmannsiellopsis viridis</name>
    <name type="common">Marine flagellate</name>
    <name type="synonym">Oltmannsiella viridis</name>
    <dbReference type="NCBI Taxonomy" id="51324"/>
    <lineage>
        <taxon>Eukaryota</taxon>
        <taxon>Viridiplantae</taxon>
        <taxon>Chlorophyta</taxon>
        <taxon>Ulvophyceae</taxon>
        <taxon>Oltmannsiellopsidales</taxon>
        <taxon>Oltmannsiellopsidaceae</taxon>
        <taxon>Oltmannsiellopsis</taxon>
    </lineage>
</organism>
<name>PSBI_OLTVI</name>
<keyword id="KW-0150">Chloroplast</keyword>
<keyword id="KW-0472">Membrane</keyword>
<keyword id="KW-0602">Photosynthesis</keyword>
<keyword id="KW-0604">Photosystem II</keyword>
<keyword id="KW-0934">Plastid</keyword>
<keyword id="KW-0674">Reaction center</keyword>
<keyword id="KW-0793">Thylakoid</keyword>
<keyword id="KW-0812">Transmembrane</keyword>
<keyword id="KW-1133">Transmembrane helix</keyword>
<reference key="1">
    <citation type="journal article" date="2006" name="BMC Biol.">
        <title>The complete chloroplast DNA sequence of the green alga Oltmannsiellopsis viridis reveals a distinctive quadripartite architecture in the chloroplast genome of early diverging ulvophytes.</title>
        <authorList>
            <person name="Pombert J.-F."/>
            <person name="Lemieux C."/>
            <person name="Turmel M."/>
        </authorList>
    </citation>
    <scope>NUCLEOTIDE SEQUENCE [LARGE SCALE GENOMIC DNA]</scope>
</reference>
<protein>
    <recommendedName>
        <fullName evidence="1">Photosystem II reaction center protein I</fullName>
        <shortName evidence="1">PSII-I</shortName>
    </recommendedName>
    <alternativeName>
        <fullName evidence="1">PSII 4.8 kDa protein</fullName>
    </alternativeName>
</protein>
<accession>Q20F21</accession>